<accession>B8NSW2</accession>
<gene>
    <name evidence="1" type="primary">mde1</name>
    <name type="ORF">AFLA_051550</name>
</gene>
<name>MTNB_ASPFN</name>
<sequence>MAKQVENNNNDHLVQSTDPEHPSNLIPELCRKFYNWGWVTGTGGGTSIRRDDHIFIAPSGVQKELMKPENIFVLQFPTPKYPPSERKYIRKPLDLKPSACTPLFLAAFERGAGCCIHTHSQWAVLVTLLVEREKGPGGYFEISNIEQIKGIPRGKGKGMLGFFDTLRIPIIENTAFEEDLTGSLEKAMEENPDTCAVLVRRHGIYVWGDNVAKAKTQCESLDYLFQLAVEMHKLGIPWVKE</sequence>
<keyword id="KW-0028">Amino-acid biosynthesis</keyword>
<keyword id="KW-0963">Cytoplasm</keyword>
<keyword id="KW-0456">Lyase</keyword>
<keyword id="KW-0479">Metal-binding</keyword>
<keyword id="KW-0486">Methionine biosynthesis</keyword>
<keyword id="KW-0862">Zinc</keyword>
<dbReference type="EC" id="4.2.1.109" evidence="1"/>
<dbReference type="EMBL" id="EQ963483">
    <property type="protein sequence ID" value="EED47101.1"/>
    <property type="molecule type" value="Genomic_DNA"/>
</dbReference>
<dbReference type="RefSeq" id="XP_002383281.1">
    <property type="nucleotide sequence ID" value="XM_002383240.1"/>
</dbReference>
<dbReference type="SMR" id="B8NSW2"/>
<dbReference type="STRING" id="332952.B8NSW2"/>
<dbReference type="EnsemblFungi" id="EED47101">
    <property type="protein sequence ID" value="EED47101"/>
    <property type="gene ID" value="AFLA_051550"/>
</dbReference>
<dbReference type="VEuPathDB" id="FungiDB:AFLA_011045"/>
<dbReference type="eggNOG" id="KOG2631">
    <property type="taxonomic scope" value="Eukaryota"/>
</dbReference>
<dbReference type="HOGENOM" id="CLU_006033_4_0_1"/>
<dbReference type="OMA" id="WFPGTSG"/>
<dbReference type="UniPathway" id="UPA00904">
    <property type="reaction ID" value="UER00875"/>
</dbReference>
<dbReference type="GO" id="GO:0005737">
    <property type="term" value="C:cytoplasm"/>
    <property type="evidence" value="ECO:0007669"/>
    <property type="project" value="UniProtKB-SubCell"/>
</dbReference>
<dbReference type="GO" id="GO:0046570">
    <property type="term" value="F:methylthioribulose 1-phosphate dehydratase activity"/>
    <property type="evidence" value="ECO:0007669"/>
    <property type="project" value="UniProtKB-UniRule"/>
</dbReference>
<dbReference type="GO" id="GO:0008270">
    <property type="term" value="F:zinc ion binding"/>
    <property type="evidence" value="ECO:0007669"/>
    <property type="project" value="UniProtKB-UniRule"/>
</dbReference>
<dbReference type="GO" id="GO:0019509">
    <property type="term" value="P:L-methionine salvage from methylthioadenosine"/>
    <property type="evidence" value="ECO:0007669"/>
    <property type="project" value="UniProtKB-UniRule"/>
</dbReference>
<dbReference type="FunFam" id="3.40.225.10:FF:000003">
    <property type="entry name" value="Methylthioribulose-1-phosphate dehydratase"/>
    <property type="match status" value="1"/>
</dbReference>
<dbReference type="Gene3D" id="3.40.225.10">
    <property type="entry name" value="Class II aldolase/adducin N-terminal domain"/>
    <property type="match status" value="1"/>
</dbReference>
<dbReference type="HAMAP" id="MF_03116">
    <property type="entry name" value="Salvage_MtnB_euk"/>
    <property type="match status" value="1"/>
</dbReference>
<dbReference type="InterPro" id="IPR001303">
    <property type="entry name" value="Aldolase_II/adducin_N"/>
</dbReference>
<dbReference type="InterPro" id="IPR036409">
    <property type="entry name" value="Aldolase_II/adducin_N_sf"/>
</dbReference>
<dbReference type="InterPro" id="IPR017714">
    <property type="entry name" value="MethylthioRu-1-P_deHdtase_MtnB"/>
</dbReference>
<dbReference type="InterPro" id="IPR027514">
    <property type="entry name" value="Salvage_MtnB_euk"/>
</dbReference>
<dbReference type="NCBIfam" id="TIGR03328">
    <property type="entry name" value="salvage_mtnB"/>
    <property type="match status" value="1"/>
</dbReference>
<dbReference type="PANTHER" id="PTHR10640">
    <property type="entry name" value="METHYLTHIORIBULOSE-1-PHOSPHATE DEHYDRATASE"/>
    <property type="match status" value="1"/>
</dbReference>
<dbReference type="PANTHER" id="PTHR10640:SF7">
    <property type="entry name" value="METHYLTHIORIBULOSE-1-PHOSPHATE DEHYDRATASE"/>
    <property type="match status" value="1"/>
</dbReference>
<dbReference type="Pfam" id="PF00596">
    <property type="entry name" value="Aldolase_II"/>
    <property type="match status" value="1"/>
</dbReference>
<dbReference type="SMART" id="SM01007">
    <property type="entry name" value="Aldolase_II"/>
    <property type="match status" value="1"/>
</dbReference>
<dbReference type="SUPFAM" id="SSF53639">
    <property type="entry name" value="AraD/HMP-PK domain-like"/>
    <property type="match status" value="1"/>
</dbReference>
<reference key="1">
    <citation type="journal article" date="2015" name="Genome Announc.">
        <title>Genome sequence of Aspergillus flavus NRRL 3357, a strain that causes aflatoxin contamination of food and feed.</title>
        <authorList>
            <person name="Nierman W.C."/>
            <person name="Yu J."/>
            <person name="Fedorova-Abrams N.D."/>
            <person name="Losada L."/>
            <person name="Cleveland T.E."/>
            <person name="Bhatnagar D."/>
            <person name="Bennett J.W."/>
            <person name="Dean R."/>
            <person name="Payne G.A."/>
        </authorList>
    </citation>
    <scope>NUCLEOTIDE SEQUENCE [LARGE SCALE GENOMIC DNA]</scope>
    <source>
        <strain>ATCC 200026 / FGSC A1120 / IAM 13836 / NRRL 3357 / JCM 12722 / SRRC 167</strain>
    </source>
</reference>
<comment type="function">
    <text evidence="1">Catalyzes the dehydration of methylthioribulose-1-phosphate (MTRu-1-P) into 2,3-diketo-5-methylthiopentyl-1-phosphate (DK-MTP-1-P).</text>
</comment>
<comment type="catalytic activity">
    <reaction evidence="1">
        <text>5-(methylsulfanyl)-D-ribulose 1-phosphate = 5-methylsulfanyl-2,3-dioxopentyl phosphate + H2O</text>
        <dbReference type="Rhea" id="RHEA:15549"/>
        <dbReference type="ChEBI" id="CHEBI:15377"/>
        <dbReference type="ChEBI" id="CHEBI:58548"/>
        <dbReference type="ChEBI" id="CHEBI:58828"/>
        <dbReference type="EC" id="4.2.1.109"/>
    </reaction>
</comment>
<comment type="cofactor">
    <cofactor evidence="1">
        <name>Zn(2+)</name>
        <dbReference type="ChEBI" id="CHEBI:29105"/>
    </cofactor>
    <text evidence="1">Binds 1 zinc ion per subunit.</text>
</comment>
<comment type="pathway">
    <text evidence="1">Amino-acid biosynthesis; L-methionine biosynthesis via salvage pathway; L-methionine from S-methyl-5-thio-alpha-D-ribose 1-phosphate: step 2/6.</text>
</comment>
<comment type="subcellular location">
    <subcellularLocation>
        <location evidence="1">Cytoplasm</location>
    </subcellularLocation>
</comment>
<comment type="similarity">
    <text evidence="1">Belongs to the aldolase class II family. MtnB subfamily.</text>
</comment>
<protein>
    <recommendedName>
        <fullName evidence="1">Methylthioribulose-1-phosphate dehydratase</fullName>
        <shortName evidence="1">MTRu-1-P dehydratase</shortName>
        <ecNumber evidence="1">4.2.1.109</ecNumber>
    </recommendedName>
</protein>
<feature type="chain" id="PRO_0000393806" description="Methylthioribulose-1-phosphate dehydratase">
    <location>
        <begin position="1"/>
        <end position="241"/>
    </location>
</feature>
<feature type="region of interest" description="Disordered" evidence="2">
    <location>
        <begin position="1"/>
        <end position="21"/>
    </location>
</feature>
<feature type="compositionally biased region" description="Polar residues" evidence="2">
    <location>
        <begin position="1"/>
        <end position="17"/>
    </location>
</feature>
<feature type="active site" description="Proton donor/acceptor" evidence="1">
    <location>
        <position position="146"/>
    </location>
</feature>
<feature type="binding site" evidence="1">
    <location>
        <position position="100"/>
    </location>
    <ligand>
        <name>substrate</name>
    </ligand>
</feature>
<feature type="binding site" evidence="1">
    <location>
        <position position="117"/>
    </location>
    <ligand>
        <name>Zn(2+)</name>
        <dbReference type="ChEBI" id="CHEBI:29105"/>
    </ligand>
</feature>
<feature type="binding site" evidence="1">
    <location>
        <position position="119"/>
    </location>
    <ligand>
        <name>Zn(2+)</name>
        <dbReference type="ChEBI" id="CHEBI:29105"/>
    </ligand>
</feature>
<feature type="binding site" evidence="1">
    <location>
        <position position="202"/>
    </location>
    <ligand>
        <name>Zn(2+)</name>
        <dbReference type="ChEBI" id="CHEBI:29105"/>
    </ligand>
</feature>
<proteinExistence type="inferred from homology"/>
<organism>
    <name type="scientific">Aspergillus flavus (strain ATCC 200026 / FGSC A1120 / IAM 13836 / NRRL 3357 / JCM 12722 / SRRC 167)</name>
    <dbReference type="NCBI Taxonomy" id="332952"/>
    <lineage>
        <taxon>Eukaryota</taxon>
        <taxon>Fungi</taxon>
        <taxon>Dikarya</taxon>
        <taxon>Ascomycota</taxon>
        <taxon>Pezizomycotina</taxon>
        <taxon>Eurotiomycetes</taxon>
        <taxon>Eurotiomycetidae</taxon>
        <taxon>Eurotiales</taxon>
        <taxon>Aspergillaceae</taxon>
        <taxon>Aspergillus</taxon>
        <taxon>Aspergillus subgen. Circumdati</taxon>
    </lineage>
</organism>
<evidence type="ECO:0000255" key="1">
    <source>
        <dbReference type="HAMAP-Rule" id="MF_03116"/>
    </source>
</evidence>
<evidence type="ECO:0000256" key="2">
    <source>
        <dbReference type="SAM" id="MobiDB-lite"/>
    </source>
</evidence>